<dbReference type="EC" id="6.1.1.11" evidence="1"/>
<dbReference type="EMBL" id="CP001158">
    <property type="protein sequence ID" value="ACL30120.1"/>
    <property type="molecule type" value="Genomic_DNA"/>
</dbReference>
<dbReference type="RefSeq" id="WP_009874267.1">
    <property type="nucleotide sequence ID" value="NC_011834.1"/>
</dbReference>
<dbReference type="SMR" id="B8D7K5"/>
<dbReference type="KEGG" id="bau:BUAPTUC7_307"/>
<dbReference type="HOGENOM" id="CLU_023797_0_1_6"/>
<dbReference type="UniPathway" id="UPA00906">
    <property type="reaction ID" value="UER00895"/>
</dbReference>
<dbReference type="GO" id="GO:0005737">
    <property type="term" value="C:cytoplasm"/>
    <property type="evidence" value="ECO:0007669"/>
    <property type="project" value="UniProtKB-SubCell"/>
</dbReference>
<dbReference type="GO" id="GO:0005524">
    <property type="term" value="F:ATP binding"/>
    <property type="evidence" value="ECO:0007669"/>
    <property type="project" value="UniProtKB-UniRule"/>
</dbReference>
<dbReference type="GO" id="GO:0004828">
    <property type="term" value="F:serine-tRNA ligase activity"/>
    <property type="evidence" value="ECO:0007669"/>
    <property type="project" value="UniProtKB-UniRule"/>
</dbReference>
<dbReference type="GO" id="GO:0016260">
    <property type="term" value="P:selenocysteine biosynthetic process"/>
    <property type="evidence" value="ECO:0007669"/>
    <property type="project" value="UniProtKB-UniRule"/>
</dbReference>
<dbReference type="GO" id="GO:0006434">
    <property type="term" value="P:seryl-tRNA aminoacylation"/>
    <property type="evidence" value="ECO:0007669"/>
    <property type="project" value="UniProtKB-UniRule"/>
</dbReference>
<dbReference type="CDD" id="cd00770">
    <property type="entry name" value="SerRS_core"/>
    <property type="match status" value="1"/>
</dbReference>
<dbReference type="Gene3D" id="3.30.930.10">
    <property type="entry name" value="Bira Bifunctional Protein, Domain 2"/>
    <property type="match status" value="1"/>
</dbReference>
<dbReference type="Gene3D" id="1.10.287.40">
    <property type="entry name" value="Serine-tRNA synthetase, tRNA binding domain"/>
    <property type="match status" value="1"/>
</dbReference>
<dbReference type="HAMAP" id="MF_00176">
    <property type="entry name" value="Ser_tRNA_synth_type1"/>
    <property type="match status" value="1"/>
</dbReference>
<dbReference type="InterPro" id="IPR002314">
    <property type="entry name" value="aa-tRNA-synt_IIb"/>
</dbReference>
<dbReference type="InterPro" id="IPR006195">
    <property type="entry name" value="aa-tRNA-synth_II"/>
</dbReference>
<dbReference type="InterPro" id="IPR045864">
    <property type="entry name" value="aa-tRNA-synth_II/BPL/LPL"/>
</dbReference>
<dbReference type="InterPro" id="IPR002317">
    <property type="entry name" value="Ser-tRNA-ligase_type_1"/>
</dbReference>
<dbReference type="InterPro" id="IPR015866">
    <property type="entry name" value="Ser-tRNA-synth_1_N"/>
</dbReference>
<dbReference type="InterPro" id="IPR042103">
    <property type="entry name" value="SerRS_1_N_sf"/>
</dbReference>
<dbReference type="InterPro" id="IPR033729">
    <property type="entry name" value="SerRS_core"/>
</dbReference>
<dbReference type="InterPro" id="IPR010978">
    <property type="entry name" value="tRNA-bd_arm"/>
</dbReference>
<dbReference type="NCBIfam" id="TIGR00414">
    <property type="entry name" value="serS"/>
    <property type="match status" value="1"/>
</dbReference>
<dbReference type="PANTHER" id="PTHR43697:SF1">
    <property type="entry name" value="SERINE--TRNA LIGASE"/>
    <property type="match status" value="1"/>
</dbReference>
<dbReference type="PANTHER" id="PTHR43697">
    <property type="entry name" value="SERYL-TRNA SYNTHETASE"/>
    <property type="match status" value="1"/>
</dbReference>
<dbReference type="Pfam" id="PF02403">
    <property type="entry name" value="Seryl_tRNA_N"/>
    <property type="match status" value="1"/>
</dbReference>
<dbReference type="Pfam" id="PF00587">
    <property type="entry name" value="tRNA-synt_2b"/>
    <property type="match status" value="1"/>
</dbReference>
<dbReference type="PIRSF" id="PIRSF001529">
    <property type="entry name" value="Ser-tRNA-synth_IIa"/>
    <property type="match status" value="1"/>
</dbReference>
<dbReference type="PRINTS" id="PR00981">
    <property type="entry name" value="TRNASYNTHSER"/>
</dbReference>
<dbReference type="SUPFAM" id="SSF55681">
    <property type="entry name" value="Class II aaRS and biotin synthetases"/>
    <property type="match status" value="1"/>
</dbReference>
<dbReference type="SUPFAM" id="SSF46589">
    <property type="entry name" value="tRNA-binding arm"/>
    <property type="match status" value="1"/>
</dbReference>
<dbReference type="PROSITE" id="PS50862">
    <property type="entry name" value="AA_TRNA_LIGASE_II"/>
    <property type="match status" value="1"/>
</dbReference>
<reference key="1">
    <citation type="journal article" date="2009" name="Science">
        <title>The dynamics and time scale of ongoing genomic erosion in symbiotic bacteria.</title>
        <authorList>
            <person name="Moran N.A."/>
            <person name="McLaughlin H.J."/>
            <person name="Sorek R."/>
        </authorList>
    </citation>
    <scope>NUCLEOTIDE SEQUENCE [LARGE SCALE GENOMIC DNA]</scope>
    <source>
        <strain>Tuc7</strain>
    </source>
</reference>
<name>SYS_BUCAT</name>
<gene>
    <name evidence="1" type="primary">serS</name>
    <name type="ordered locus">BUAPTUC7_307</name>
</gene>
<keyword id="KW-0030">Aminoacyl-tRNA synthetase</keyword>
<keyword id="KW-0067">ATP-binding</keyword>
<keyword id="KW-0963">Cytoplasm</keyword>
<keyword id="KW-0436">Ligase</keyword>
<keyword id="KW-0547">Nucleotide-binding</keyword>
<keyword id="KW-0648">Protein biosynthesis</keyword>
<evidence type="ECO:0000255" key="1">
    <source>
        <dbReference type="HAMAP-Rule" id="MF_00176"/>
    </source>
</evidence>
<protein>
    <recommendedName>
        <fullName evidence="1">Serine--tRNA ligase</fullName>
        <ecNumber evidence="1">6.1.1.11</ecNumber>
    </recommendedName>
    <alternativeName>
        <fullName evidence="1">Seryl-tRNA synthetase</fullName>
        <shortName evidence="1">SerRS</shortName>
    </alternativeName>
    <alternativeName>
        <fullName evidence="1">Seryl-tRNA(Ser/Sec) synthetase</fullName>
    </alternativeName>
</protein>
<comment type="function">
    <text evidence="1">Catalyzes the attachment of serine to tRNA(Ser). Is also able to aminoacylate tRNA(Sec) with serine, to form the misacylated tRNA L-seryl-tRNA(Sec), which will be further converted into selenocysteinyl-tRNA(Sec).</text>
</comment>
<comment type="catalytic activity">
    <reaction evidence="1">
        <text>tRNA(Ser) + L-serine + ATP = L-seryl-tRNA(Ser) + AMP + diphosphate + H(+)</text>
        <dbReference type="Rhea" id="RHEA:12292"/>
        <dbReference type="Rhea" id="RHEA-COMP:9669"/>
        <dbReference type="Rhea" id="RHEA-COMP:9703"/>
        <dbReference type="ChEBI" id="CHEBI:15378"/>
        <dbReference type="ChEBI" id="CHEBI:30616"/>
        <dbReference type="ChEBI" id="CHEBI:33019"/>
        <dbReference type="ChEBI" id="CHEBI:33384"/>
        <dbReference type="ChEBI" id="CHEBI:78442"/>
        <dbReference type="ChEBI" id="CHEBI:78533"/>
        <dbReference type="ChEBI" id="CHEBI:456215"/>
        <dbReference type="EC" id="6.1.1.11"/>
    </reaction>
</comment>
<comment type="catalytic activity">
    <reaction evidence="1">
        <text>tRNA(Sec) + L-serine + ATP = L-seryl-tRNA(Sec) + AMP + diphosphate + H(+)</text>
        <dbReference type="Rhea" id="RHEA:42580"/>
        <dbReference type="Rhea" id="RHEA-COMP:9742"/>
        <dbReference type="Rhea" id="RHEA-COMP:10128"/>
        <dbReference type="ChEBI" id="CHEBI:15378"/>
        <dbReference type="ChEBI" id="CHEBI:30616"/>
        <dbReference type="ChEBI" id="CHEBI:33019"/>
        <dbReference type="ChEBI" id="CHEBI:33384"/>
        <dbReference type="ChEBI" id="CHEBI:78442"/>
        <dbReference type="ChEBI" id="CHEBI:78533"/>
        <dbReference type="ChEBI" id="CHEBI:456215"/>
        <dbReference type="EC" id="6.1.1.11"/>
    </reaction>
</comment>
<comment type="pathway">
    <text evidence="1">Aminoacyl-tRNA biosynthesis; selenocysteinyl-tRNA(Sec) biosynthesis; L-seryl-tRNA(Sec) from L-serine and tRNA(Sec): step 1/1.</text>
</comment>
<comment type="subunit">
    <text evidence="1">Homodimer. The tRNA molecule binds across the dimer.</text>
</comment>
<comment type="subcellular location">
    <subcellularLocation>
        <location evidence="1">Cytoplasm</location>
    </subcellularLocation>
</comment>
<comment type="domain">
    <text evidence="1">Consists of two distinct domains, a catalytic core and a N-terminal extension that is involved in tRNA binding.</text>
</comment>
<comment type="similarity">
    <text evidence="1">Belongs to the class-II aminoacyl-tRNA synthetase family. Type-1 seryl-tRNA synthetase subfamily.</text>
</comment>
<feature type="chain" id="PRO_1000123877" description="Serine--tRNA ligase">
    <location>
        <begin position="1"/>
        <end position="427"/>
    </location>
</feature>
<feature type="binding site" evidence="1">
    <location>
        <begin position="233"/>
        <end position="235"/>
    </location>
    <ligand>
        <name>L-serine</name>
        <dbReference type="ChEBI" id="CHEBI:33384"/>
    </ligand>
</feature>
<feature type="binding site" evidence="1">
    <location>
        <begin position="264"/>
        <end position="266"/>
    </location>
    <ligand>
        <name>ATP</name>
        <dbReference type="ChEBI" id="CHEBI:30616"/>
    </ligand>
</feature>
<feature type="binding site" evidence="1">
    <location>
        <position position="287"/>
    </location>
    <ligand>
        <name>L-serine</name>
        <dbReference type="ChEBI" id="CHEBI:33384"/>
    </ligand>
</feature>
<feature type="binding site" evidence="1">
    <location>
        <begin position="351"/>
        <end position="354"/>
    </location>
    <ligand>
        <name>ATP</name>
        <dbReference type="ChEBI" id="CHEBI:30616"/>
    </ligand>
</feature>
<feature type="binding site" evidence="1">
    <location>
        <position position="387"/>
    </location>
    <ligand>
        <name>L-serine</name>
        <dbReference type="ChEBI" id="CHEBI:33384"/>
    </ligand>
</feature>
<sequence length="427" mass="49523">MLNPYLLRNELHLTAKKLLKKGYKLNISKISSMEEKRKTLQIQTENLQFKHNALSNLFKENKNIKNKNELLRHQVIQSSKDLNASKIELNSLKEKIHHFSMCIPNIPSDDVPEGNTSINNKEIKYWGQKKKYDFEIQDHIELGKKFNELDWKSSAQMSGSRFVIMKGKIALLHRALSQFMLDLHTLKHGYIESYVPYLVHSEALYGTGQLPKFSDDLFHINLTDKKKYILIPTGEVPLTNLVYDQIIDEKDLPIMLTAHTPCFRSEASSYGRDTKGLIRLHQFDKVELVQIVKPEKSYEALEKLTNHAEKVLQLLNLPYRKMLLCTGDTGFAAVKTYDLEVWFPSEKKYREVSSCSNMSDFQARRIKARYRKKSEQKNFFVHTLNGSGLAIGRTLAAILENYQHSNGRIEIPKVLQKKYMQGLEFIN</sequence>
<accession>B8D7K5</accession>
<organism>
    <name type="scientific">Buchnera aphidicola subsp. Acyrthosiphon pisum (strain Tuc7)</name>
    <dbReference type="NCBI Taxonomy" id="561501"/>
    <lineage>
        <taxon>Bacteria</taxon>
        <taxon>Pseudomonadati</taxon>
        <taxon>Pseudomonadota</taxon>
        <taxon>Gammaproteobacteria</taxon>
        <taxon>Enterobacterales</taxon>
        <taxon>Erwiniaceae</taxon>
        <taxon>Buchnera</taxon>
    </lineage>
</organism>
<proteinExistence type="inferred from homology"/>